<sequence length="347" mass="38967">MDASVDRITNLHFEILAKAGGHEIHQKYEAIRKLNLTGDSSKSNISVSARSAILKWADAKQGYIASQLDDRDYGDLIAKAVIFVPMSVITGGKNPKDLIPYGVVAAVLIFVPETLTLLDEIVINLMHDKKPLSSILLTKILRDMKIDVCGSNFDSFYYCPISRYNRHIIKLAGALPQMPTSVRLSVNDLARVAISEVHNQLISDKQMFFKLPTGFSPKVHCLKVLCTTEMEIFQKWVRTFMSDRPNEFIYSDQFNILSRTTYFSSDDPFSFFTLWRGWSTYKEILSQDQASSFLEAIGSGKPLRSSIATFPSMFDEGAIYIRYEWITPKDSANSKKAGSSAPSAPKM</sequence>
<evidence type="ECO:0000250" key="1"/>
<evidence type="ECO:0000305" key="2"/>
<proteinExistence type="inferred from homology"/>
<organismHost>
    <name type="scientific">Catharanthus roseus</name>
    <name type="common">Madagascar periwinkle</name>
    <name type="synonym">Vinca rosea</name>
    <dbReference type="NCBI Taxonomy" id="4058"/>
</organismHost>
<organismHost>
    <name type="scientific">Melilotus officinalis</name>
    <name type="common">Yellow sweet clover</name>
    <name type="synonym">Trifolium officinale</name>
    <dbReference type="NCBI Taxonomy" id="47083"/>
</organismHost>
<organismHost>
    <name type="scientific">Trifolium incarnatum</name>
    <name type="common">Crimson clover</name>
    <dbReference type="NCBI Taxonomy" id="60916"/>
</organismHost>
<accession>P13094</accession>
<keyword id="KW-0945">Host-virus interaction</keyword>
<keyword id="KW-1090">Inhibition of host innate immune response by virus</keyword>
<keyword id="KW-0941">Suppressor of RNA silencing</keyword>
<keyword id="KW-0899">Viral immunoevasion</keyword>
<comment type="function">
    <text evidence="1">Suppressor of RNA-mediated gene silencing, also known as post-transcriptional gene silencing (PTGS), a mechanism of plant viral defense that limits the accumulation of viral RNAs.</text>
</comment>
<comment type="similarity">
    <text evidence="2">Belongs to the phytoreovirus non-structural protein 10 family.</text>
</comment>
<reference key="1">
    <citation type="journal article" date="1989" name="Virology">
        <title>Complete nucleotide sequence of wound tumor virus genomic segments encoding nonstructural polypeptides.</title>
        <authorList>
            <person name="Anzola J.V."/>
            <person name="Dall D.J."/>
            <person name="Xu Z."/>
            <person name="Nuss D.L."/>
        </authorList>
    </citation>
    <scope>NUCLEOTIDE SEQUENCE [GENOMIC RNA]</scope>
</reference>
<organism>
    <name type="scientific">Wound tumor virus</name>
    <name type="common">WTV</name>
    <dbReference type="NCBI Taxonomy" id="10987"/>
    <lineage>
        <taxon>Viruses</taxon>
        <taxon>Riboviria</taxon>
        <taxon>Orthornavirae</taxon>
        <taxon>Duplornaviricota</taxon>
        <taxon>Resentoviricetes</taxon>
        <taxon>Reovirales</taxon>
        <taxon>Sedoreoviridae</taxon>
        <taxon>Phytoreovirus</taxon>
    </lineage>
</organism>
<feature type="chain" id="PRO_0000222774" description="Suppressor of RNA-mediated gene silencing">
    <location>
        <begin position="1"/>
        <end position="347"/>
    </location>
</feature>
<protein>
    <recommendedName>
        <fullName>Suppressor of RNA-mediated gene silencing</fullName>
    </recommendedName>
    <alternativeName>
        <fullName>Non-structural protein 10</fullName>
        <shortName>Pns10</shortName>
    </alternativeName>
</protein>
<name>VSR_WTV</name>
<dbReference type="EMBL" id="M24114">
    <property type="protein sequence ID" value="AAA48505.1"/>
    <property type="molecule type" value="Genomic_RNA"/>
</dbReference>
<dbReference type="PIR" id="D32442">
    <property type="entry name" value="MNXRWE"/>
</dbReference>
<dbReference type="RefSeq" id="YP_009508278.1">
    <property type="nucleotide sequence ID" value="NC_038950.1"/>
</dbReference>
<dbReference type="GeneID" id="37619688"/>
<dbReference type="OrthoDB" id="14817at10239"/>
<dbReference type="Proteomes" id="UP000242823">
    <property type="component" value="Genome"/>
</dbReference>
<dbReference type="GO" id="GO:0052170">
    <property type="term" value="P:symbiont-mediated suppression of host innate immune response"/>
    <property type="evidence" value="ECO:0007669"/>
    <property type="project" value="UniProtKB-KW"/>
</dbReference>
<dbReference type="InterPro" id="IPR008777">
    <property type="entry name" value="Phytoreo_Pns"/>
</dbReference>
<dbReference type="Pfam" id="PF05451">
    <property type="entry name" value="Phytoreo_Pns"/>
    <property type="match status" value="1"/>
</dbReference>